<keyword id="KW-0456">Lyase</keyword>
<keyword id="KW-0460">Magnesium</keyword>
<keyword id="KW-0464">Manganese</keyword>
<keyword id="KW-0479">Metal-binding</keyword>
<comment type="function">
    <text evidence="2">Monoterpene synthase producing mainly (+)-alpha-terpineol (44%) and (-)-limonene (33.6%) and lower amounts of (E)-geraniol (5.9%), linalool (5.0%), myrcene (3.4%), (-)-alpha-pinene (3.3%), (+)-sabinene (3.0%) and alpha-terpinolene (1.6%).</text>
</comment>
<comment type="catalytic activity">
    <reaction evidence="2">
        <text>(2E)-geranyl diphosphate + H2O = (R)-alpha-terpineol + diphosphate</text>
        <dbReference type="Rhea" id="RHEA:32555"/>
        <dbReference type="ChEBI" id="CHEBI:300"/>
        <dbReference type="ChEBI" id="CHEBI:15377"/>
        <dbReference type="ChEBI" id="CHEBI:33019"/>
        <dbReference type="ChEBI" id="CHEBI:58057"/>
        <dbReference type="EC" id="4.2.3.112"/>
    </reaction>
</comment>
<comment type="cofactor">
    <cofactor evidence="4">
        <name>Mg(2+)</name>
        <dbReference type="ChEBI" id="CHEBI:18420"/>
    </cofactor>
    <cofactor evidence="4">
        <name>Mn(2+)</name>
        <dbReference type="ChEBI" id="CHEBI:29035"/>
    </cofactor>
    <text evidence="4">Binds 3 Mg(2+) or Mn(2+) ions per subunit.</text>
</comment>
<comment type="domain">
    <text evidence="1">The Asp-Asp-Xaa-Xaa-Asp/Glu (DDXXD/E) motif is important for the catalytic activity, presumably through binding to Mg(2+).</text>
</comment>
<comment type="similarity">
    <text evidence="3">Belongs to the terpene synthase family. Tpsb subfamily.</text>
</comment>
<sequence length="576" mass="65844">MDAFATSPTSALIKAVNCIAHVTPMAGEDSSENRRASNYKPSTWDYEFLQSLATSHNTVQEKHMKMAEKLKEEVKSMIKGQMEPVAKLELINILQRLGLKYRFESEIKEELFSLYKDGTDAWWVDNLHATALRFRLLRENGIFVPQDVFETLKDKSGKFKSQLCKDVRGLLSLYEASYLGWEGEDLLDEAKKFSTTNLNNVKESISSNTLGRLVKHALNLPLHWSAARYEARWFIDEYEKEENVNPNLLKYAKLDFNIVQSIHQQELGNLARWWVETGLDKLSFVRNTLMQNFMWGCAMVFEPQYGKVRDAAVKQASLIAMVDDVYDVYGSLEELEIFTDIVDRWDITGIDKLPRNISMILLTMFNTANQIGYDLLRDRGFNGIPHIAQAWATLCKKYLKEAKWYHSGYKPTLEEYLENGLVSISFVLSLVTAYLQTEILENLTYESAAYVNSVPPLVRYSGLLNRLYNDLGTSSAEIARGDTLKSIQCYMTQTGATEEAAREHIKGLVHEAWKGMNKCLFEQTPFAEPFVGFNVNTVRGSQFFYQHGDGYAVTESWTKDLSLSVLIHPIPLNEED</sequence>
<accession>B5A434</accession>
<proteinExistence type="evidence at protein level"/>
<evidence type="ECO:0000250" key="1">
    <source>
        <dbReference type="UniProtKB" id="Q40577"/>
    </source>
</evidence>
<evidence type="ECO:0000269" key="2">
    <source>
    </source>
</evidence>
<evidence type="ECO:0000305" key="3"/>
<evidence type="ECO:0000305" key="4">
    <source>
    </source>
</evidence>
<name>MTPS1_SANAL</name>
<feature type="chain" id="PRO_0000419322" description="(+)-alpha-terpineol synthase">
    <location>
        <begin position="1"/>
        <end position="576"/>
    </location>
</feature>
<feature type="short sequence motif" description="DDXXD motif" evidence="1">
    <location>
        <begin position="323"/>
        <end position="327"/>
    </location>
</feature>
<feature type="binding site" evidence="1">
    <location>
        <position position="286"/>
    </location>
    <ligand>
        <name>(2E)-geranyl diphosphate</name>
        <dbReference type="ChEBI" id="CHEBI:58057"/>
    </ligand>
</feature>
<feature type="binding site" evidence="1">
    <location>
        <position position="323"/>
    </location>
    <ligand>
        <name>(2E)-geranyl diphosphate</name>
        <dbReference type="ChEBI" id="CHEBI:58057"/>
    </ligand>
</feature>
<feature type="binding site" evidence="1">
    <location>
        <position position="323"/>
    </location>
    <ligand>
        <name>Mg(2+)</name>
        <dbReference type="ChEBI" id="CHEBI:18420"/>
        <label>1</label>
    </ligand>
</feature>
<feature type="binding site" evidence="1">
    <location>
        <position position="323"/>
    </location>
    <ligand>
        <name>Mg(2+)</name>
        <dbReference type="ChEBI" id="CHEBI:18420"/>
        <label>2</label>
    </ligand>
</feature>
<feature type="binding site" evidence="1">
    <location>
        <position position="327"/>
    </location>
    <ligand>
        <name>(2E)-geranyl diphosphate</name>
        <dbReference type="ChEBI" id="CHEBI:58057"/>
    </ligand>
</feature>
<feature type="binding site" evidence="1">
    <location>
        <position position="327"/>
    </location>
    <ligand>
        <name>Mg(2+)</name>
        <dbReference type="ChEBI" id="CHEBI:18420"/>
        <label>1</label>
    </ligand>
</feature>
<feature type="binding site" evidence="1">
    <location>
        <position position="327"/>
    </location>
    <ligand>
        <name>Mg(2+)</name>
        <dbReference type="ChEBI" id="CHEBI:18420"/>
        <label>2</label>
    </ligand>
</feature>
<feature type="binding site" evidence="1">
    <location>
        <position position="466"/>
    </location>
    <ligand>
        <name>(2E)-geranyl diphosphate</name>
        <dbReference type="ChEBI" id="CHEBI:58057"/>
    </ligand>
</feature>
<feature type="binding site" evidence="1">
    <location>
        <position position="469"/>
    </location>
    <ligand>
        <name>(2E)-geranyl diphosphate</name>
        <dbReference type="ChEBI" id="CHEBI:58057"/>
    </ligand>
</feature>
<feature type="binding site" evidence="1">
    <location>
        <position position="469"/>
    </location>
    <ligand>
        <name>Mg(2+)</name>
        <dbReference type="ChEBI" id="CHEBI:18420"/>
        <label>3</label>
    </ligand>
</feature>
<feature type="binding site" evidence="1">
    <location>
        <position position="473"/>
    </location>
    <ligand>
        <name>Mg(2+)</name>
        <dbReference type="ChEBI" id="CHEBI:18420"/>
        <label>3</label>
    </ligand>
</feature>
<feature type="binding site" evidence="1">
    <location>
        <position position="477"/>
    </location>
    <ligand>
        <name>Mg(2+)</name>
        <dbReference type="ChEBI" id="CHEBI:18420"/>
        <label>3</label>
    </ligand>
</feature>
<reference key="1">
    <citation type="journal article" date="2008" name="Arch. Biochem. Biophys.">
        <title>Isolation of cDNAs and functional characterisation of two multi-product terpene synthase enzymes from sandalwood, Santalum album L.</title>
        <authorList>
            <person name="Jones C.G."/>
            <person name="Keeling C.I."/>
            <person name="Ghisalberti E.L."/>
            <person name="Barbour E.L."/>
            <person name="Plummer J.A."/>
            <person name="Bohlmann J."/>
        </authorList>
    </citation>
    <scope>NUCLEOTIDE SEQUENCE [MRNA]</scope>
    <scope>FUNCTION</scope>
    <scope>COFACTOR</scope>
    <scope>CATALYTIC ACTIVITY</scope>
</reference>
<protein>
    <recommendedName>
        <fullName>(+)-alpha-terpineol synthase</fullName>
        <shortName>SaMonoTPS1</shortName>
        <ecNumber evidence="2">4.2.3.112</ecNumber>
    </recommendedName>
</protein>
<dbReference type="EC" id="4.2.3.112" evidence="2"/>
<dbReference type="EMBL" id="EU798692">
    <property type="protein sequence ID" value="ACF24767.1"/>
    <property type="molecule type" value="mRNA"/>
</dbReference>
<dbReference type="SMR" id="B5A434"/>
<dbReference type="KEGG" id="ag:ACF24767"/>
<dbReference type="GO" id="GO:0000287">
    <property type="term" value="F:magnesium ion binding"/>
    <property type="evidence" value="ECO:0007669"/>
    <property type="project" value="InterPro"/>
</dbReference>
<dbReference type="GO" id="GO:0010333">
    <property type="term" value="F:terpene synthase activity"/>
    <property type="evidence" value="ECO:0000314"/>
    <property type="project" value="UniProtKB"/>
</dbReference>
<dbReference type="GO" id="GO:0016102">
    <property type="term" value="P:diterpenoid biosynthetic process"/>
    <property type="evidence" value="ECO:0007669"/>
    <property type="project" value="InterPro"/>
</dbReference>
<dbReference type="GO" id="GO:0033383">
    <property type="term" value="P:geranyl diphosphate metabolic process"/>
    <property type="evidence" value="ECO:0000314"/>
    <property type="project" value="UniProtKB"/>
</dbReference>
<dbReference type="CDD" id="cd00684">
    <property type="entry name" value="Terpene_cyclase_plant_C1"/>
    <property type="match status" value="1"/>
</dbReference>
<dbReference type="FunFam" id="1.10.600.10:FF:000007">
    <property type="entry name" value="Isoprene synthase, chloroplastic"/>
    <property type="match status" value="1"/>
</dbReference>
<dbReference type="FunFam" id="1.50.10.130:FF:000001">
    <property type="entry name" value="Isoprene synthase, chloroplastic"/>
    <property type="match status" value="1"/>
</dbReference>
<dbReference type="Gene3D" id="1.10.600.10">
    <property type="entry name" value="Farnesyl Diphosphate Synthase"/>
    <property type="match status" value="1"/>
</dbReference>
<dbReference type="Gene3D" id="1.50.10.130">
    <property type="entry name" value="Terpene synthase, N-terminal domain"/>
    <property type="match status" value="1"/>
</dbReference>
<dbReference type="InterPro" id="IPR008949">
    <property type="entry name" value="Isoprenoid_synthase_dom_sf"/>
</dbReference>
<dbReference type="InterPro" id="IPR034741">
    <property type="entry name" value="Terpene_cyclase-like_1_C"/>
</dbReference>
<dbReference type="InterPro" id="IPR044814">
    <property type="entry name" value="Terpene_cyclase_plant_C1"/>
</dbReference>
<dbReference type="InterPro" id="IPR001906">
    <property type="entry name" value="Terpene_synth_N"/>
</dbReference>
<dbReference type="InterPro" id="IPR036965">
    <property type="entry name" value="Terpene_synth_N_sf"/>
</dbReference>
<dbReference type="InterPro" id="IPR050148">
    <property type="entry name" value="Terpene_synthase-like"/>
</dbReference>
<dbReference type="InterPro" id="IPR005630">
    <property type="entry name" value="Terpene_synthase_metal-bd"/>
</dbReference>
<dbReference type="InterPro" id="IPR008930">
    <property type="entry name" value="Terpenoid_cyclase/PrenylTrfase"/>
</dbReference>
<dbReference type="PANTHER" id="PTHR31225:SF245">
    <property type="entry name" value="(-)-ALPHA-TERPINEOL SYNTHASE-LIKE"/>
    <property type="match status" value="1"/>
</dbReference>
<dbReference type="PANTHER" id="PTHR31225">
    <property type="entry name" value="OS04G0344100 PROTEIN-RELATED"/>
    <property type="match status" value="1"/>
</dbReference>
<dbReference type="Pfam" id="PF01397">
    <property type="entry name" value="Terpene_synth"/>
    <property type="match status" value="1"/>
</dbReference>
<dbReference type="Pfam" id="PF03936">
    <property type="entry name" value="Terpene_synth_C"/>
    <property type="match status" value="1"/>
</dbReference>
<dbReference type="SFLD" id="SFLDS00005">
    <property type="entry name" value="Isoprenoid_Synthase_Type_I"/>
    <property type="match status" value="1"/>
</dbReference>
<dbReference type="SFLD" id="SFLDG01019">
    <property type="entry name" value="Terpene_Cyclase_Like_1_C_Termi"/>
    <property type="match status" value="1"/>
</dbReference>
<dbReference type="SUPFAM" id="SSF48239">
    <property type="entry name" value="Terpenoid cyclases/Protein prenyltransferases"/>
    <property type="match status" value="1"/>
</dbReference>
<dbReference type="SUPFAM" id="SSF48576">
    <property type="entry name" value="Terpenoid synthases"/>
    <property type="match status" value="1"/>
</dbReference>
<organism>
    <name type="scientific">Santalum album</name>
    <name type="common">White sandalwood</name>
    <dbReference type="NCBI Taxonomy" id="35974"/>
    <lineage>
        <taxon>Eukaryota</taxon>
        <taxon>Viridiplantae</taxon>
        <taxon>Streptophyta</taxon>
        <taxon>Embryophyta</taxon>
        <taxon>Tracheophyta</taxon>
        <taxon>Spermatophyta</taxon>
        <taxon>Magnoliopsida</taxon>
        <taxon>eudicotyledons</taxon>
        <taxon>Gunneridae</taxon>
        <taxon>Pentapetalae</taxon>
        <taxon>Santalales</taxon>
        <taxon>Santalaceae</taxon>
        <taxon>Santalum</taxon>
    </lineage>
</organism>